<keyword id="KW-0106">Calcium</keyword>
<keyword id="KW-0998">Cell outer membrane</keyword>
<keyword id="KW-0378">Hydrolase</keyword>
<keyword id="KW-0442">Lipid degradation</keyword>
<keyword id="KW-0443">Lipid metabolism</keyword>
<keyword id="KW-0472">Membrane</keyword>
<keyword id="KW-0479">Metal-binding</keyword>
<keyword id="KW-1185">Reference proteome</keyword>
<keyword id="KW-0732">Signal</keyword>
<keyword id="KW-0812">Transmembrane</keyword>
<keyword id="KW-1134">Transmembrane beta strand</keyword>
<name>PA1_SALTY</name>
<proteinExistence type="inferred from homology"/>
<gene>
    <name type="primary">pldA</name>
    <name type="ordered locus">STM3957</name>
    <name type="ORF">STMD1.33</name>
</gene>
<feature type="signal peptide" evidence="1">
    <location>
        <begin position="1"/>
        <end position="20"/>
    </location>
</feature>
<feature type="chain" id="PRO_0000021989" description="Phospholipase A1">
    <location>
        <begin position="21"/>
        <end position="289"/>
    </location>
</feature>
<feature type="topological domain" description="Periplasmic" evidence="1">
    <location>
        <begin position="21"/>
        <end position="52"/>
    </location>
</feature>
<feature type="transmembrane region" description="Beta stranded" evidence="1">
    <location>
        <begin position="53"/>
        <end position="65"/>
    </location>
</feature>
<feature type="topological domain" description="Extracellular" evidence="1">
    <location>
        <begin position="66"/>
        <end position="84"/>
    </location>
</feature>
<feature type="transmembrane region" description="Beta stranded" evidence="1">
    <location>
        <begin position="85"/>
        <end position="99"/>
    </location>
</feature>
<feature type="topological domain" description="Periplasmic" evidence="1">
    <location>
        <begin position="100"/>
        <end position="105"/>
    </location>
</feature>
<feature type="transmembrane region" description="Beta stranded" evidence="1">
    <location>
        <begin position="106"/>
        <end position="118"/>
    </location>
</feature>
<feature type="topological domain" description="Extracellular" evidence="1">
    <location>
        <begin position="119"/>
        <end position="128"/>
    </location>
</feature>
<feature type="transmembrane region" description="Beta stranded" evidence="1">
    <location>
        <begin position="129"/>
        <end position="148"/>
    </location>
</feature>
<feature type="topological domain" description="Periplasmic" evidence="1">
    <location>
        <begin position="149"/>
        <end position="150"/>
    </location>
</feature>
<feature type="transmembrane region" description="Beta stranded" evidence="1">
    <location>
        <begin position="151"/>
        <end position="164"/>
    </location>
</feature>
<feature type="topological domain" description="Extracellular" evidence="1">
    <location>
        <begin position="165"/>
        <end position="173"/>
    </location>
</feature>
<feature type="transmembrane region" description="Beta stranded" evidence="1">
    <location>
        <begin position="174"/>
        <end position="186"/>
    </location>
</feature>
<feature type="topological domain" description="Periplasmic" evidence="1">
    <location>
        <begin position="187"/>
        <end position="188"/>
    </location>
</feature>
<feature type="transmembrane region" description="Beta stranded" evidence="1">
    <location>
        <begin position="189"/>
        <end position="198"/>
    </location>
</feature>
<feature type="topological domain" description="Extracellular" evidence="1">
    <location>
        <begin position="199"/>
        <end position="216"/>
    </location>
</feature>
<feature type="transmembrane region" description="Beta stranded" evidence="1">
    <location>
        <begin position="217"/>
        <end position="223"/>
    </location>
</feature>
<feature type="topological domain" description="Periplasmic" evidence="1">
    <location>
        <begin position="224"/>
        <end position="225"/>
    </location>
</feature>
<feature type="transmembrane region" description="Beta stranded" evidence="1">
    <location>
        <begin position="226"/>
        <end position="234"/>
    </location>
</feature>
<feature type="topological domain" description="Extracellular" evidence="1">
    <location>
        <begin position="235"/>
        <end position="241"/>
    </location>
</feature>
<feature type="transmembrane region" description="Beta stranded" evidence="1">
    <location>
        <begin position="242"/>
        <end position="250"/>
    </location>
</feature>
<feature type="topological domain" description="Periplasmic" evidence="1">
    <location>
        <begin position="251"/>
        <end position="255"/>
    </location>
</feature>
<feature type="transmembrane region" description="Beta stranded" evidence="1">
    <location>
        <begin position="256"/>
        <end position="265"/>
    </location>
</feature>
<feature type="topological domain" description="Extracellular" evidence="1">
    <location>
        <begin position="266"/>
        <end position="274"/>
    </location>
</feature>
<feature type="transmembrane region" description="Beta stranded" evidence="1">
    <location>
        <begin position="275"/>
        <end position="286"/>
    </location>
</feature>
<feature type="topological domain" description="Periplasmic" evidence="1">
    <location>
        <begin position="287"/>
        <end position="289"/>
    </location>
</feature>
<feature type="active site" description="Proton acceptor" evidence="1">
    <location>
        <position position="162"/>
    </location>
</feature>
<feature type="active site" description="Nucleophile" evidence="1">
    <location>
        <position position="164"/>
    </location>
</feature>
<feature type="binding site" description="in dimeric form" evidence="1">
    <location>
        <position position="126"/>
    </location>
    <ligand>
        <name>Ca(2+)</name>
        <dbReference type="ChEBI" id="CHEBI:29108"/>
        <label>1</label>
    </ligand>
</feature>
<feature type="binding site" description="in dimeric form" evidence="1">
    <location>
        <position position="167"/>
    </location>
    <ligand>
        <name>Ca(2+)</name>
        <dbReference type="ChEBI" id="CHEBI:29108"/>
        <label>2</label>
    </ligand>
</feature>
<feature type="binding site" description="in dimeric form" evidence="1">
    <location>
        <position position="172"/>
    </location>
    <ligand>
        <name>Ca(2+)</name>
        <dbReference type="ChEBI" id="CHEBI:29108"/>
        <label>2</label>
    </ligand>
</feature>
<feature type="binding site" description="in monomeric form" evidence="1">
    <location>
        <position position="204"/>
    </location>
    <ligand>
        <name>Ca(2+)</name>
        <dbReference type="ChEBI" id="CHEBI:29108"/>
        <label>3</label>
    </ligand>
</feature>
<feature type="sequence conflict" description="In Ref. 1; CAA54222." evidence="2" ref="1">
    <original>D</original>
    <variation>H</variation>
    <location>
        <position position="155"/>
    </location>
</feature>
<feature type="sequence conflict" description="In Ref. 1; CAA54222." evidence="2" ref="1">
    <original>S</original>
    <variation>T</variation>
    <location>
        <position position="174"/>
    </location>
</feature>
<protein>
    <recommendedName>
        <fullName>Phospholipase A1</fullName>
        <ecNumber>3.1.1.32</ecNumber>
        <ecNumber>3.1.1.4</ecNumber>
    </recommendedName>
    <alternativeName>
        <fullName>Detergent-resistant phospholipase A</fullName>
        <shortName>DR-phospholipase A</shortName>
    </alternativeName>
    <alternativeName>
        <fullName>Outer membrane phospholipase A</fullName>
        <shortName>OM PLA</shortName>
    </alternativeName>
    <alternativeName>
        <fullName>Phosphatidylcholine 1-acylhydrolase</fullName>
    </alternativeName>
</protein>
<dbReference type="EC" id="3.1.1.32"/>
<dbReference type="EC" id="3.1.1.4"/>
<dbReference type="EMBL" id="X76900">
    <property type="protein sequence ID" value="CAA54222.1"/>
    <property type="molecule type" value="Genomic_DNA"/>
</dbReference>
<dbReference type="EMBL" id="AF233324">
    <property type="protein sequence ID" value="AAF33435.1"/>
    <property type="molecule type" value="Genomic_DNA"/>
</dbReference>
<dbReference type="EMBL" id="AE006468">
    <property type="protein sequence ID" value="AAL22801.1"/>
    <property type="molecule type" value="Genomic_DNA"/>
</dbReference>
<dbReference type="PIR" id="A36971">
    <property type="entry name" value="A36971"/>
</dbReference>
<dbReference type="RefSeq" id="NP_462842.1">
    <property type="nucleotide sequence ID" value="NC_003197.2"/>
</dbReference>
<dbReference type="RefSeq" id="WP_001201692.1">
    <property type="nucleotide sequence ID" value="NC_003197.2"/>
</dbReference>
<dbReference type="SMR" id="P0A231"/>
<dbReference type="STRING" id="99287.STM3957"/>
<dbReference type="PaxDb" id="99287-STM3957"/>
<dbReference type="GeneID" id="1255483"/>
<dbReference type="KEGG" id="stm:STM3957"/>
<dbReference type="PATRIC" id="fig|99287.12.peg.4175"/>
<dbReference type="HOGENOM" id="CLU_045813_1_0_6"/>
<dbReference type="OMA" id="DVRWGGC"/>
<dbReference type="PhylomeDB" id="P0A231"/>
<dbReference type="BioCyc" id="SENT99287:STM3957-MONOMER"/>
<dbReference type="Proteomes" id="UP000001014">
    <property type="component" value="Chromosome"/>
</dbReference>
<dbReference type="GO" id="GO:0009279">
    <property type="term" value="C:cell outer membrane"/>
    <property type="evidence" value="ECO:0000318"/>
    <property type="project" value="GO_Central"/>
</dbReference>
<dbReference type="GO" id="GO:0005509">
    <property type="term" value="F:calcium ion binding"/>
    <property type="evidence" value="ECO:0000318"/>
    <property type="project" value="GO_Central"/>
</dbReference>
<dbReference type="GO" id="GO:0008970">
    <property type="term" value="F:phospholipase A1 activity"/>
    <property type="evidence" value="ECO:0007669"/>
    <property type="project" value="UniProtKB-EC"/>
</dbReference>
<dbReference type="GO" id="GO:0004623">
    <property type="term" value="F:phospholipase A2 activity"/>
    <property type="evidence" value="ECO:0000318"/>
    <property type="project" value="GO_Central"/>
</dbReference>
<dbReference type="GO" id="GO:0016042">
    <property type="term" value="P:lipid catabolic process"/>
    <property type="evidence" value="ECO:0007669"/>
    <property type="project" value="UniProtKB-KW"/>
</dbReference>
<dbReference type="CDD" id="cd00541">
    <property type="entry name" value="OMPLA"/>
    <property type="match status" value="1"/>
</dbReference>
<dbReference type="FunFam" id="2.40.230.10:FF:000001">
    <property type="entry name" value="Phospholipase A(1)"/>
    <property type="match status" value="1"/>
</dbReference>
<dbReference type="Gene3D" id="2.40.230.10">
    <property type="entry name" value="Phospholipase A1"/>
    <property type="match status" value="1"/>
</dbReference>
<dbReference type="InterPro" id="IPR003187">
    <property type="entry name" value="PLipase_A1"/>
</dbReference>
<dbReference type="InterPro" id="IPR036541">
    <property type="entry name" value="PLipase_A1_sf"/>
</dbReference>
<dbReference type="NCBIfam" id="NF008031">
    <property type="entry name" value="PRK10763.1"/>
    <property type="match status" value="1"/>
</dbReference>
<dbReference type="PANTHER" id="PTHR40457">
    <property type="entry name" value="PHOSPHOLIPASE A1"/>
    <property type="match status" value="1"/>
</dbReference>
<dbReference type="PANTHER" id="PTHR40457:SF1">
    <property type="entry name" value="PHOSPHOLIPASE A1"/>
    <property type="match status" value="1"/>
</dbReference>
<dbReference type="Pfam" id="PF02253">
    <property type="entry name" value="PLA1"/>
    <property type="match status" value="1"/>
</dbReference>
<dbReference type="PRINTS" id="PR01486">
    <property type="entry name" value="PHPHLIPASEA1"/>
</dbReference>
<dbReference type="SUPFAM" id="SSF56931">
    <property type="entry name" value="Outer membrane phospholipase A (OMPLA)"/>
    <property type="match status" value="1"/>
</dbReference>
<reference key="1">
    <citation type="journal article" date="1994" name="J. Bacteriol.">
        <title>Molecular characterization of enterobacterial pldA genes encoding outer membrane phospholipase A.</title>
        <authorList>
            <person name="Brok R.G.P.M."/>
            <person name="Brinkman E."/>
            <person name="van Boxtel R."/>
            <person name="Bekkers A.C.A.P."/>
            <person name="Verheij H.M."/>
            <person name="Tommassen J."/>
        </authorList>
    </citation>
    <scope>NUCLEOTIDE SEQUENCE [GENOMIC DNA]</scope>
</reference>
<reference key="2">
    <citation type="journal article" date="2001" name="Nature">
        <title>Complete genome sequence of Salmonella enterica serovar Typhimurium LT2.</title>
        <authorList>
            <person name="McClelland M."/>
            <person name="Sanderson K.E."/>
            <person name="Spieth J."/>
            <person name="Clifton S.W."/>
            <person name="Latreille P."/>
            <person name="Courtney L."/>
            <person name="Porwollik S."/>
            <person name="Ali J."/>
            <person name="Dante M."/>
            <person name="Du F."/>
            <person name="Hou S."/>
            <person name="Layman D."/>
            <person name="Leonard S."/>
            <person name="Nguyen C."/>
            <person name="Scott K."/>
            <person name="Holmes A."/>
            <person name="Grewal N."/>
            <person name="Mulvaney E."/>
            <person name="Ryan E."/>
            <person name="Sun H."/>
            <person name="Florea L."/>
            <person name="Miller W."/>
            <person name="Stoneking T."/>
            <person name="Nhan M."/>
            <person name="Waterston R."/>
            <person name="Wilson R.K."/>
        </authorList>
    </citation>
    <scope>NUCLEOTIDE SEQUENCE [LARGE SCALE GENOMIC DNA]</scope>
    <source>
        <strain>LT2 / SGSC1412 / ATCC 700720</strain>
    </source>
</reference>
<sequence length="289" mass="32967">MRAILRGLLPATLLPLAAYAQEATIKEVHDAPAVRGSIIANMLQEHDNPFTLYPYDTNYLIYTNTSDLNKEAISTYNWSENARKDEVKFQLSLAFPLWRGILGPNSVLGASYTQKSWWQLSNSKESSPFRETNYEPQLFLGFATDYRFAGWTLRDVEMGYNHDSNGRSDPTSRSWNRLYTRLMAENGNWLVEVKPWYVIGSTDDNPDITKYMGYYQLKIGYHLGEAVLSAKGQYNWNTGYGGAEVGLSYPVTKHVRLYTQVYSGYGESLIDYNFNQTRVGVGVMLNDIF</sequence>
<accession>P0A231</accession>
<accession>P37442</accession>
<accession>Q9L6N9</accession>
<evidence type="ECO:0000250" key="1"/>
<evidence type="ECO:0000305" key="2"/>
<organism>
    <name type="scientific">Salmonella typhimurium (strain LT2 / SGSC1412 / ATCC 700720)</name>
    <dbReference type="NCBI Taxonomy" id="99287"/>
    <lineage>
        <taxon>Bacteria</taxon>
        <taxon>Pseudomonadati</taxon>
        <taxon>Pseudomonadota</taxon>
        <taxon>Gammaproteobacteria</taxon>
        <taxon>Enterobacterales</taxon>
        <taxon>Enterobacteriaceae</taxon>
        <taxon>Salmonella</taxon>
    </lineage>
</organism>
<comment type="function">
    <text>Hydrolysis of phosphatidylcholine with phospholipase A2 (EC 3.1.1.4) and phospholipase A1 (EC 3.1.1.32) activities.</text>
</comment>
<comment type="catalytic activity">
    <reaction>
        <text>a 1,2-diacyl-sn-glycero-3-phosphocholine + H2O = a 2-acyl-sn-glycero-3-phosphocholine + a fatty acid + H(+)</text>
        <dbReference type="Rhea" id="RHEA:18689"/>
        <dbReference type="ChEBI" id="CHEBI:15377"/>
        <dbReference type="ChEBI" id="CHEBI:15378"/>
        <dbReference type="ChEBI" id="CHEBI:28868"/>
        <dbReference type="ChEBI" id="CHEBI:57643"/>
        <dbReference type="ChEBI" id="CHEBI:57875"/>
        <dbReference type="EC" id="3.1.1.32"/>
    </reaction>
</comment>
<comment type="catalytic activity">
    <reaction>
        <text>a 1,2-diacyl-sn-glycero-3-phosphocholine + H2O = a 1-acyl-sn-glycero-3-phosphocholine + a fatty acid + H(+)</text>
        <dbReference type="Rhea" id="RHEA:15801"/>
        <dbReference type="ChEBI" id="CHEBI:15377"/>
        <dbReference type="ChEBI" id="CHEBI:15378"/>
        <dbReference type="ChEBI" id="CHEBI:28868"/>
        <dbReference type="ChEBI" id="CHEBI:57643"/>
        <dbReference type="ChEBI" id="CHEBI:58168"/>
        <dbReference type="EC" id="3.1.1.4"/>
    </reaction>
</comment>
<comment type="cofactor">
    <cofactor evidence="1">
        <name>Ca(2+)</name>
        <dbReference type="ChEBI" id="CHEBI:29108"/>
    </cofactor>
    <text evidence="1">Binds 1 Ca(2+) ion per monomer. In the dimeric form the Ca(2+) is bound by different amino acids with binding of each Ca(2+) shared with ligands coming from each monomer. The Ca(2+) ion may have a role in catalysis.</text>
</comment>
<comment type="subunit">
    <text evidence="1">Homodimer; dimerization is reversible, and the dimeric form is the active one.</text>
</comment>
<comment type="subcellular location">
    <subcellularLocation>
        <location evidence="1">Cell outer membrane</location>
        <topology evidence="1">Multi-pass membrane protein</topology>
    </subcellularLocation>
    <text evidence="1">One of the very few enzymes located there.</text>
</comment>
<comment type="similarity">
    <text evidence="2">Belongs to the phospholipase A1 family.</text>
</comment>